<comment type="function">
    <text evidence="1">NDH-1 shuttles electrons from an unknown electron donor, via FMN and iron-sulfur (Fe-S) centers, to quinones in the respiratory and/or the photosynthetic chain. The immediate electron acceptor for the enzyme in this species is believed to be plastoquinone. Couples the redox reaction to proton translocation, and thus conserves the redox energy in a proton gradient. Cyanobacterial NDH-1 also plays a role in inorganic carbon-concentration.</text>
</comment>
<comment type="catalytic activity">
    <reaction evidence="1">
        <text>a plastoquinone + NADH + (n+1) H(+)(in) = a plastoquinol + NAD(+) + n H(+)(out)</text>
        <dbReference type="Rhea" id="RHEA:42608"/>
        <dbReference type="Rhea" id="RHEA-COMP:9561"/>
        <dbReference type="Rhea" id="RHEA-COMP:9562"/>
        <dbReference type="ChEBI" id="CHEBI:15378"/>
        <dbReference type="ChEBI" id="CHEBI:17757"/>
        <dbReference type="ChEBI" id="CHEBI:57540"/>
        <dbReference type="ChEBI" id="CHEBI:57945"/>
        <dbReference type="ChEBI" id="CHEBI:62192"/>
    </reaction>
</comment>
<comment type="catalytic activity">
    <reaction evidence="1">
        <text>a plastoquinone + NADPH + (n+1) H(+)(in) = a plastoquinol + NADP(+) + n H(+)(out)</text>
        <dbReference type="Rhea" id="RHEA:42612"/>
        <dbReference type="Rhea" id="RHEA-COMP:9561"/>
        <dbReference type="Rhea" id="RHEA-COMP:9562"/>
        <dbReference type="ChEBI" id="CHEBI:15378"/>
        <dbReference type="ChEBI" id="CHEBI:17757"/>
        <dbReference type="ChEBI" id="CHEBI:57783"/>
        <dbReference type="ChEBI" id="CHEBI:58349"/>
        <dbReference type="ChEBI" id="CHEBI:62192"/>
    </reaction>
</comment>
<comment type="subunit">
    <text evidence="1">NDH-1 can be composed of about 15 different subunits; different subcomplexes with different compositions have been identified which probably have different functions.</text>
</comment>
<comment type="subcellular location">
    <subcellularLocation>
        <location evidence="1">Cellular thylakoid membrane</location>
        <topology evidence="1">Peripheral membrane protein</topology>
        <orientation evidence="1">Cytoplasmic side</orientation>
    </subcellularLocation>
</comment>
<comment type="similarity">
    <text evidence="1">Belongs to the complex I NdhM subunit family.</text>
</comment>
<sequence length="109" mass="12697">MLLKSTTRHIRIYTAEVKNNQLIESNNVLTLDVDPDNEFNWEEVALNKVYSKFDELVESYNGEELSEYNLRRIGSDLEHFIRSLLQKGEISYNLNARVQNYSMGLPKLG</sequence>
<name>NDHM_MICAN</name>
<feature type="chain" id="PRO_0000352183" description="NAD(P)H-quinone oxidoreductase subunit M">
    <location>
        <begin position="1"/>
        <end position="109"/>
    </location>
</feature>
<reference key="1">
    <citation type="journal article" date="2007" name="DNA Res.">
        <title>Complete genomic structure of the bloom-forming toxic cyanobacterium Microcystis aeruginosa NIES-843.</title>
        <authorList>
            <person name="Kaneko T."/>
            <person name="Nakajima N."/>
            <person name="Okamoto S."/>
            <person name="Suzuki I."/>
            <person name="Tanabe Y."/>
            <person name="Tamaoki M."/>
            <person name="Nakamura Y."/>
            <person name="Kasai F."/>
            <person name="Watanabe A."/>
            <person name="Kawashima K."/>
            <person name="Kishida Y."/>
            <person name="Ono A."/>
            <person name="Shimizu Y."/>
            <person name="Takahashi C."/>
            <person name="Minami C."/>
            <person name="Fujishiro T."/>
            <person name="Kohara M."/>
            <person name="Katoh M."/>
            <person name="Nakazaki N."/>
            <person name="Nakayama S."/>
            <person name="Yamada M."/>
            <person name="Tabata S."/>
            <person name="Watanabe M.M."/>
        </authorList>
    </citation>
    <scope>NUCLEOTIDE SEQUENCE [LARGE SCALE GENOMIC DNA]</scope>
    <source>
        <strain>NIES-843 / IAM M-247</strain>
    </source>
</reference>
<protein>
    <recommendedName>
        <fullName evidence="1">NAD(P)H-quinone oxidoreductase subunit M</fullName>
        <ecNumber evidence="1">7.1.1.-</ecNumber>
    </recommendedName>
    <alternativeName>
        <fullName evidence="1">NAD(P)H dehydrogenase I subunit M</fullName>
        <shortName evidence="1">NDH-1 subunit M</shortName>
        <shortName evidence="1">NDH-M</shortName>
    </alternativeName>
</protein>
<accession>B0JPD8</accession>
<organism>
    <name type="scientific">Microcystis aeruginosa (strain NIES-843 / IAM M-2473)</name>
    <dbReference type="NCBI Taxonomy" id="449447"/>
    <lineage>
        <taxon>Bacteria</taxon>
        <taxon>Bacillati</taxon>
        <taxon>Cyanobacteriota</taxon>
        <taxon>Cyanophyceae</taxon>
        <taxon>Oscillatoriophycideae</taxon>
        <taxon>Chroococcales</taxon>
        <taxon>Microcystaceae</taxon>
        <taxon>Microcystis</taxon>
    </lineage>
</organism>
<gene>
    <name evidence="1" type="primary">ndhM</name>
    <name type="ordered locus">MAE_06270</name>
</gene>
<proteinExistence type="inferred from homology"/>
<evidence type="ECO:0000255" key="1">
    <source>
        <dbReference type="HAMAP-Rule" id="MF_01352"/>
    </source>
</evidence>
<dbReference type="EC" id="7.1.1.-" evidence="1"/>
<dbReference type="EMBL" id="AP009552">
    <property type="protein sequence ID" value="BAG00449.1"/>
    <property type="molecule type" value="Genomic_DNA"/>
</dbReference>
<dbReference type="RefSeq" id="WP_002738864.1">
    <property type="nucleotide sequence ID" value="NC_010296.1"/>
</dbReference>
<dbReference type="SMR" id="B0JPD8"/>
<dbReference type="STRING" id="449447.MAE_06270"/>
<dbReference type="PaxDb" id="449447-MAE_06270"/>
<dbReference type="EnsemblBacteria" id="BAG00449">
    <property type="protein sequence ID" value="BAG00449"/>
    <property type="gene ID" value="MAE_06270"/>
</dbReference>
<dbReference type="KEGG" id="mar:MAE_06270"/>
<dbReference type="eggNOG" id="ENOG5031AQM">
    <property type="taxonomic scope" value="Bacteria"/>
</dbReference>
<dbReference type="HOGENOM" id="CLU_137431_0_0_3"/>
<dbReference type="BioCyc" id="MAER449447:MAE_RS02790-MONOMER"/>
<dbReference type="Proteomes" id="UP000001510">
    <property type="component" value="Chromosome"/>
</dbReference>
<dbReference type="GO" id="GO:0031676">
    <property type="term" value="C:plasma membrane-derived thylakoid membrane"/>
    <property type="evidence" value="ECO:0007669"/>
    <property type="project" value="UniProtKB-SubCell"/>
</dbReference>
<dbReference type="GO" id="GO:0016655">
    <property type="term" value="F:oxidoreductase activity, acting on NAD(P)H, quinone or similar compound as acceptor"/>
    <property type="evidence" value="ECO:0007669"/>
    <property type="project" value="UniProtKB-UniRule"/>
</dbReference>
<dbReference type="GO" id="GO:0048038">
    <property type="term" value="F:quinone binding"/>
    <property type="evidence" value="ECO:0007669"/>
    <property type="project" value="UniProtKB-KW"/>
</dbReference>
<dbReference type="HAMAP" id="MF_01352">
    <property type="entry name" value="NDH1_NDH1M"/>
    <property type="match status" value="1"/>
</dbReference>
<dbReference type="InterPro" id="IPR018922">
    <property type="entry name" value="NdhM"/>
</dbReference>
<dbReference type="PANTHER" id="PTHR36900">
    <property type="entry name" value="NAD(P)H-QUINONE OXIDOREDUCTASE SUBUNIT M, CHLOROPLASTIC"/>
    <property type="match status" value="1"/>
</dbReference>
<dbReference type="PANTHER" id="PTHR36900:SF1">
    <property type="entry name" value="NAD(P)H-QUINONE OXIDOREDUCTASE SUBUNIT M, CHLOROPLASTIC"/>
    <property type="match status" value="1"/>
</dbReference>
<dbReference type="Pfam" id="PF10664">
    <property type="entry name" value="NdhM"/>
    <property type="match status" value="1"/>
</dbReference>
<keyword id="KW-0472">Membrane</keyword>
<keyword id="KW-0520">NAD</keyword>
<keyword id="KW-0521">NADP</keyword>
<keyword id="KW-0618">Plastoquinone</keyword>
<keyword id="KW-0874">Quinone</keyword>
<keyword id="KW-0793">Thylakoid</keyword>
<keyword id="KW-1278">Translocase</keyword>
<keyword id="KW-0813">Transport</keyword>